<sequence>MQHKVVSIGDIKVANNLPFVLFGGMNVLESRDLAMRICEHYVTVTQKLDIPYVFKASFDKANRSSIHSYRGPGLDEGMKIFQELKETFGVKIITDVHEPSQAQPVSEVVDVIQLPAFLARQTDLVEAMAKTGAVINVKKPQFVSPGQMGNIVEKFKEGGNDQVILCDRGSNFGYDNLVVDMLGFHVMMQASEGAPVIFDVTHSLQCRDPFGAASGGRRGQVAELARAGMAVGLAGLFLEAHPDPDHARCDGPSALPLAKLEPFLAQIKAIDSLVKSFPELDTSK</sequence>
<gene>
    <name evidence="1" type="primary">kdsA</name>
    <name type="ordered locus">PMI1090</name>
</gene>
<feature type="chain" id="PRO_1000091825" description="2-dehydro-3-deoxyphosphooctonate aldolase">
    <location>
        <begin position="1"/>
        <end position="284"/>
    </location>
</feature>
<dbReference type="EC" id="2.5.1.55" evidence="1"/>
<dbReference type="EMBL" id="AM942759">
    <property type="protein sequence ID" value="CAR42352.1"/>
    <property type="molecule type" value="Genomic_DNA"/>
</dbReference>
<dbReference type="RefSeq" id="WP_004242689.1">
    <property type="nucleotide sequence ID" value="NC_010554.1"/>
</dbReference>
<dbReference type="SMR" id="B4EVS0"/>
<dbReference type="EnsemblBacteria" id="CAR42352">
    <property type="protein sequence ID" value="CAR42352"/>
    <property type="gene ID" value="PMI1090"/>
</dbReference>
<dbReference type="GeneID" id="6800070"/>
<dbReference type="KEGG" id="pmr:PMI1090"/>
<dbReference type="eggNOG" id="COG2877">
    <property type="taxonomic scope" value="Bacteria"/>
</dbReference>
<dbReference type="HOGENOM" id="CLU_036666_0_0_6"/>
<dbReference type="UniPathway" id="UPA00030"/>
<dbReference type="UniPathway" id="UPA00357">
    <property type="reaction ID" value="UER00474"/>
</dbReference>
<dbReference type="Proteomes" id="UP000008319">
    <property type="component" value="Chromosome"/>
</dbReference>
<dbReference type="GO" id="GO:0005737">
    <property type="term" value="C:cytoplasm"/>
    <property type="evidence" value="ECO:0007669"/>
    <property type="project" value="UniProtKB-SubCell"/>
</dbReference>
<dbReference type="GO" id="GO:0008676">
    <property type="term" value="F:3-deoxy-8-phosphooctulonate synthase activity"/>
    <property type="evidence" value="ECO:0007669"/>
    <property type="project" value="UniProtKB-UniRule"/>
</dbReference>
<dbReference type="GO" id="GO:0019294">
    <property type="term" value="P:keto-3-deoxy-D-manno-octulosonic acid biosynthetic process"/>
    <property type="evidence" value="ECO:0007669"/>
    <property type="project" value="UniProtKB-UniRule"/>
</dbReference>
<dbReference type="FunFam" id="3.20.20.70:FF:000058">
    <property type="entry name" value="2-dehydro-3-deoxyphosphooctonate aldolase"/>
    <property type="match status" value="1"/>
</dbReference>
<dbReference type="Gene3D" id="3.20.20.70">
    <property type="entry name" value="Aldolase class I"/>
    <property type="match status" value="1"/>
</dbReference>
<dbReference type="HAMAP" id="MF_00056">
    <property type="entry name" value="KDO8P_synth"/>
    <property type="match status" value="1"/>
</dbReference>
<dbReference type="InterPro" id="IPR013785">
    <property type="entry name" value="Aldolase_TIM"/>
</dbReference>
<dbReference type="InterPro" id="IPR006218">
    <property type="entry name" value="DAHP1/KDSA"/>
</dbReference>
<dbReference type="InterPro" id="IPR006269">
    <property type="entry name" value="KDO8P_synthase"/>
</dbReference>
<dbReference type="NCBIfam" id="TIGR01362">
    <property type="entry name" value="KDO8P_synth"/>
    <property type="match status" value="1"/>
</dbReference>
<dbReference type="NCBIfam" id="NF003543">
    <property type="entry name" value="PRK05198.1"/>
    <property type="match status" value="1"/>
</dbReference>
<dbReference type="NCBIfam" id="NF009109">
    <property type="entry name" value="PRK12457.1"/>
    <property type="match status" value="1"/>
</dbReference>
<dbReference type="PANTHER" id="PTHR21057">
    <property type="entry name" value="PHOSPHO-2-DEHYDRO-3-DEOXYHEPTONATE ALDOLASE"/>
    <property type="match status" value="1"/>
</dbReference>
<dbReference type="Pfam" id="PF00793">
    <property type="entry name" value="DAHP_synth_1"/>
    <property type="match status" value="1"/>
</dbReference>
<dbReference type="SUPFAM" id="SSF51569">
    <property type="entry name" value="Aldolase"/>
    <property type="match status" value="1"/>
</dbReference>
<organism>
    <name type="scientific">Proteus mirabilis (strain HI4320)</name>
    <dbReference type="NCBI Taxonomy" id="529507"/>
    <lineage>
        <taxon>Bacteria</taxon>
        <taxon>Pseudomonadati</taxon>
        <taxon>Pseudomonadota</taxon>
        <taxon>Gammaproteobacteria</taxon>
        <taxon>Enterobacterales</taxon>
        <taxon>Morganellaceae</taxon>
        <taxon>Proteus</taxon>
    </lineage>
</organism>
<keyword id="KW-0963">Cytoplasm</keyword>
<keyword id="KW-0448">Lipopolysaccharide biosynthesis</keyword>
<keyword id="KW-1185">Reference proteome</keyword>
<keyword id="KW-0808">Transferase</keyword>
<proteinExistence type="inferred from homology"/>
<evidence type="ECO:0000255" key="1">
    <source>
        <dbReference type="HAMAP-Rule" id="MF_00056"/>
    </source>
</evidence>
<reference key="1">
    <citation type="journal article" date="2008" name="J. Bacteriol.">
        <title>Complete genome sequence of uropathogenic Proteus mirabilis, a master of both adherence and motility.</title>
        <authorList>
            <person name="Pearson M.M."/>
            <person name="Sebaihia M."/>
            <person name="Churcher C."/>
            <person name="Quail M.A."/>
            <person name="Seshasayee A.S."/>
            <person name="Luscombe N.M."/>
            <person name="Abdellah Z."/>
            <person name="Arrosmith C."/>
            <person name="Atkin B."/>
            <person name="Chillingworth T."/>
            <person name="Hauser H."/>
            <person name="Jagels K."/>
            <person name="Moule S."/>
            <person name="Mungall K."/>
            <person name="Norbertczak H."/>
            <person name="Rabbinowitsch E."/>
            <person name="Walker D."/>
            <person name="Whithead S."/>
            <person name="Thomson N.R."/>
            <person name="Rather P.N."/>
            <person name="Parkhill J."/>
            <person name="Mobley H.L.T."/>
        </authorList>
    </citation>
    <scope>NUCLEOTIDE SEQUENCE [LARGE SCALE GENOMIC DNA]</scope>
    <source>
        <strain>HI4320</strain>
    </source>
</reference>
<protein>
    <recommendedName>
        <fullName evidence="1">2-dehydro-3-deoxyphosphooctonate aldolase</fullName>
        <ecNumber evidence="1">2.5.1.55</ecNumber>
    </recommendedName>
    <alternativeName>
        <fullName evidence="1">3-deoxy-D-manno-octulosonic acid 8-phosphate synthase</fullName>
    </alternativeName>
    <alternativeName>
        <fullName evidence="1">KDO-8-phosphate synthase</fullName>
        <shortName evidence="1">KDO 8-P synthase</shortName>
        <shortName evidence="1">KDOPS</shortName>
    </alternativeName>
    <alternativeName>
        <fullName evidence="1">Phospho-2-dehydro-3-deoxyoctonate aldolase</fullName>
    </alternativeName>
</protein>
<comment type="catalytic activity">
    <reaction evidence="1">
        <text>D-arabinose 5-phosphate + phosphoenolpyruvate + H2O = 3-deoxy-alpha-D-manno-2-octulosonate-8-phosphate + phosphate</text>
        <dbReference type="Rhea" id="RHEA:14053"/>
        <dbReference type="ChEBI" id="CHEBI:15377"/>
        <dbReference type="ChEBI" id="CHEBI:43474"/>
        <dbReference type="ChEBI" id="CHEBI:57693"/>
        <dbReference type="ChEBI" id="CHEBI:58702"/>
        <dbReference type="ChEBI" id="CHEBI:85985"/>
        <dbReference type="EC" id="2.5.1.55"/>
    </reaction>
</comment>
<comment type="pathway">
    <text evidence="1">Carbohydrate biosynthesis; 3-deoxy-D-manno-octulosonate biosynthesis; 3-deoxy-D-manno-octulosonate from D-ribulose 5-phosphate: step 2/3.</text>
</comment>
<comment type="pathway">
    <text evidence="1">Bacterial outer membrane biogenesis; lipopolysaccharide biosynthesis.</text>
</comment>
<comment type="subcellular location">
    <subcellularLocation>
        <location evidence="1">Cytoplasm</location>
    </subcellularLocation>
</comment>
<comment type="similarity">
    <text evidence="1">Belongs to the KdsA family.</text>
</comment>
<name>KDSA_PROMH</name>
<accession>B4EVS0</accession>